<keyword id="KW-0002">3D-structure</keyword>
<keyword id="KW-0007">Acetylation</keyword>
<keyword id="KW-0903">Direct protein sequencing</keyword>
<keyword id="KW-0349">Heme</keyword>
<keyword id="KW-0408">Iron</keyword>
<keyword id="KW-0479">Metal-binding</keyword>
<keyword id="KW-0561">Oxygen transport</keyword>
<keyword id="KW-0597">Phosphoprotein</keyword>
<keyword id="KW-1185">Reference proteome</keyword>
<keyword id="KW-0813">Transport</keyword>
<organism>
    <name type="scientific">Rattus norvegicus</name>
    <name type="common">Rat</name>
    <dbReference type="NCBI Taxonomy" id="10116"/>
    <lineage>
        <taxon>Eukaryota</taxon>
        <taxon>Metazoa</taxon>
        <taxon>Chordata</taxon>
        <taxon>Craniata</taxon>
        <taxon>Vertebrata</taxon>
        <taxon>Euteleostomi</taxon>
        <taxon>Mammalia</taxon>
        <taxon>Eutheria</taxon>
        <taxon>Euarchontoglires</taxon>
        <taxon>Glires</taxon>
        <taxon>Rodentia</taxon>
        <taxon>Myomorpha</taxon>
        <taxon>Muroidea</taxon>
        <taxon>Muridae</taxon>
        <taxon>Murinae</taxon>
        <taxon>Rattus</taxon>
    </lineage>
</organism>
<gene>
    <name type="primary">Hba1</name>
    <name type="synonym">Hba-a1</name>
</gene>
<evidence type="ECO:0000250" key="1">
    <source>
        <dbReference type="UniProtKB" id="P01942"/>
    </source>
</evidence>
<evidence type="ECO:0000250" key="2">
    <source>
        <dbReference type="UniProtKB" id="P69905"/>
    </source>
</evidence>
<evidence type="ECO:0000255" key="3">
    <source>
        <dbReference type="PROSITE-ProRule" id="PRU00238"/>
    </source>
</evidence>
<evidence type="ECO:0000269" key="4">
    <source>
    </source>
</evidence>
<evidence type="ECO:0000269" key="5">
    <source>
    </source>
</evidence>
<evidence type="ECO:0000269" key="6">
    <source>
    </source>
</evidence>
<evidence type="ECO:0000269" key="7">
    <source>
    </source>
</evidence>
<evidence type="ECO:0000269" key="8">
    <source>
    </source>
</evidence>
<evidence type="ECO:0000269" key="9">
    <source>
    </source>
</evidence>
<evidence type="ECO:0000269" key="10">
    <source ref="10"/>
</evidence>
<evidence type="ECO:0000303" key="11">
    <source>
    </source>
</evidence>
<evidence type="ECO:0000305" key="12"/>
<evidence type="ECO:0007829" key="13">
    <source>
        <dbReference type="PDB" id="3HF4"/>
    </source>
</evidence>
<proteinExistence type="evidence at protein level"/>
<feature type="initiator methionine" description="Removed" evidence="9 10">
    <location>
        <position position="1"/>
    </location>
</feature>
<feature type="chain" id="PRO_0000052751" description="Hemoglobin subunit alpha-1/2">
    <location>
        <begin position="2"/>
        <end position="142"/>
    </location>
</feature>
<feature type="peptide" id="PRO_0000455938" description="Hemopressin" evidence="5">
    <location>
        <begin position="96"/>
        <end position="104"/>
    </location>
</feature>
<feature type="domain" description="Globin" evidence="3">
    <location>
        <begin position="2"/>
        <end position="142"/>
    </location>
</feature>
<feature type="binding site" evidence="3">
    <location>
        <position position="59"/>
    </location>
    <ligand>
        <name>O2</name>
        <dbReference type="ChEBI" id="CHEBI:15379"/>
    </ligand>
</feature>
<feature type="binding site" description="proximal binding residue" evidence="3">
    <location>
        <position position="88"/>
    </location>
    <ligand>
        <name>heme b</name>
        <dbReference type="ChEBI" id="CHEBI:60344"/>
    </ligand>
    <ligandPart>
        <name>Fe</name>
        <dbReference type="ChEBI" id="CHEBI:18248"/>
    </ligandPart>
</feature>
<feature type="modified residue" description="Phosphoserine" evidence="2">
    <location>
        <position position="4"/>
    </location>
</feature>
<feature type="modified residue" description="N6-succinyllysine" evidence="1">
    <location>
        <position position="8"/>
    </location>
</feature>
<feature type="modified residue" description="Phosphothreonine" evidence="2">
    <location>
        <position position="9"/>
    </location>
</feature>
<feature type="modified residue" description="N6-succinyllysine" evidence="1">
    <location>
        <position position="12"/>
    </location>
</feature>
<feature type="modified residue" description="N6-acetyllysine; alternate" evidence="2">
    <location>
        <position position="17"/>
    </location>
</feature>
<feature type="modified residue" description="N6-succinyllysine; alternate" evidence="1">
    <location>
        <position position="17"/>
    </location>
</feature>
<feature type="modified residue" description="Phosphotyrosine" evidence="2">
    <location>
        <position position="25"/>
    </location>
</feature>
<feature type="modified residue" description="N6-succinyllysine" evidence="1">
    <location>
        <position position="41"/>
    </location>
</feature>
<feature type="modified residue" description="Phosphoserine" evidence="2">
    <location>
        <position position="50"/>
    </location>
</feature>
<feature type="modified residue" description="Phosphoserine" evidence="1">
    <location>
        <position position="103"/>
    </location>
</feature>
<feature type="modified residue" description="Phosphothreonine" evidence="1">
    <location>
        <position position="109"/>
    </location>
</feature>
<feature type="modified residue" description="Phosphoserine" evidence="1">
    <location>
        <position position="125"/>
    </location>
</feature>
<feature type="modified residue" description="Phosphoserine" evidence="1">
    <location>
        <position position="132"/>
    </location>
</feature>
<feature type="modified residue" description="Phosphothreonine" evidence="1">
    <location>
        <position position="135"/>
    </location>
</feature>
<feature type="modified residue" description="Phosphothreonine" evidence="1">
    <location>
        <position position="138"/>
    </location>
</feature>
<feature type="modified residue" description="Phosphoserine" evidence="1">
    <location>
        <position position="139"/>
    </location>
</feature>
<feature type="sequence variant" description="In alpha-2." evidence="4 6 8">
    <original>D</original>
    <variation>A</variation>
    <location>
        <position position="6"/>
    </location>
</feature>
<feature type="sequence variant">
    <original>S</original>
    <variation>N</variation>
    <location>
        <position position="45"/>
    </location>
</feature>
<feature type="sequence conflict" description="In Ref. 9; AA sequence." evidence="12" ref="9">
    <original>H</original>
    <variation>S</variation>
    <location>
        <position position="21"/>
    </location>
</feature>
<feature type="sequence conflict" description="In Ref. 1; AA sequence." evidence="12" ref="1">
    <original>ADHVEDLPG</original>
    <variation>GAHLBBVPZ</variation>
    <location>
        <begin position="71"/>
        <end position="79"/>
    </location>
</feature>
<feature type="helix" evidence="13">
    <location>
        <begin position="5"/>
        <end position="18"/>
    </location>
</feature>
<feature type="helix" evidence="13">
    <location>
        <begin position="19"/>
        <end position="21"/>
    </location>
</feature>
<feature type="helix" evidence="13">
    <location>
        <begin position="22"/>
        <end position="36"/>
    </location>
</feature>
<feature type="helix" evidence="13">
    <location>
        <begin position="38"/>
        <end position="44"/>
    </location>
</feature>
<feature type="strand" evidence="13">
    <location>
        <begin position="50"/>
        <end position="52"/>
    </location>
</feature>
<feature type="helix" evidence="13">
    <location>
        <begin position="54"/>
        <end position="72"/>
    </location>
</feature>
<feature type="helix" evidence="13">
    <location>
        <begin position="74"/>
        <end position="76"/>
    </location>
</feature>
<feature type="helix" evidence="13">
    <location>
        <begin position="77"/>
        <end position="80"/>
    </location>
</feature>
<feature type="helix" evidence="13">
    <location>
        <begin position="82"/>
        <end position="89"/>
    </location>
</feature>
<feature type="helix" evidence="13">
    <location>
        <begin position="96"/>
        <end position="113"/>
    </location>
</feature>
<feature type="turn" evidence="13">
    <location>
        <begin position="115"/>
        <end position="117"/>
    </location>
</feature>
<feature type="helix" evidence="13">
    <location>
        <begin position="120"/>
        <end position="137"/>
    </location>
</feature>
<protein>
    <recommendedName>
        <fullName>Hemoglobin subunit alpha-1/2</fullName>
    </recommendedName>
    <alternativeName>
        <fullName>Alpha-1/2-globin</fullName>
    </alternativeName>
    <alternativeName>
        <fullName>Hemoglobin alpha-1/2 chain</fullName>
    </alternativeName>
    <component>
        <recommendedName>
            <fullName evidence="11">Hemopressin</fullName>
        </recommendedName>
    </component>
</protein>
<dbReference type="EMBL" id="M17083">
    <property type="protein sequence ID" value="AAA41308.1"/>
    <property type="molecule type" value="mRNA"/>
</dbReference>
<dbReference type="EMBL" id="X56325">
    <property type="protein sequence ID" value="CAA39764.1"/>
    <property type="molecule type" value="Genomic_DNA"/>
</dbReference>
<dbReference type="EMBL" id="X65495">
    <property type="protein sequence ID" value="CAA46476.1"/>
    <property type="molecule type" value="Genomic_DNA"/>
</dbReference>
<dbReference type="EMBL" id="U29528">
    <property type="protein sequence ID" value="AAA99054.1"/>
    <property type="molecule type" value="Genomic_DNA"/>
</dbReference>
<dbReference type="EMBL" id="BC059150">
    <property type="protein sequence ID" value="AAH59150.1"/>
    <property type="molecule type" value="mRNA"/>
</dbReference>
<dbReference type="EMBL" id="BC091567">
    <property type="protein sequence ID" value="AAH91567.1"/>
    <property type="molecule type" value="mRNA"/>
</dbReference>
<dbReference type="EMBL" id="S66657">
    <property type="protein sequence ID" value="AAP13984.1"/>
    <property type="molecule type" value="Genomic_DNA"/>
</dbReference>
<dbReference type="EMBL" id="M32510">
    <property type="protein sequence ID" value="AAA41315.1"/>
    <property type="molecule type" value="mRNA"/>
</dbReference>
<dbReference type="PIR" id="I54239">
    <property type="entry name" value="HART1"/>
</dbReference>
<dbReference type="RefSeq" id="NP_001007723.1">
    <property type="nucleotide sequence ID" value="NM_001007722.1"/>
</dbReference>
<dbReference type="RefSeq" id="NP_037228.1">
    <property type="nucleotide sequence ID" value="NM_013096.1"/>
</dbReference>
<dbReference type="PDB" id="3DHT">
    <property type="method" value="X-ray"/>
    <property type="resolution" value="2.98 A"/>
    <property type="chains" value="A=2-142"/>
</dbReference>
<dbReference type="PDB" id="3HF4">
    <property type="method" value="X-ray"/>
    <property type="resolution" value="2.70 A"/>
    <property type="chains" value="A/E=2-142"/>
</dbReference>
<dbReference type="PDBsum" id="3DHT"/>
<dbReference type="PDBsum" id="3HF4"/>
<dbReference type="SMR" id="P01946"/>
<dbReference type="BioGRID" id="247661">
    <property type="interactions" value="4"/>
</dbReference>
<dbReference type="BioGRID" id="261987">
    <property type="interactions" value="2"/>
</dbReference>
<dbReference type="ComplexPortal" id="CPX-2925">
    <property type="entry name" value="Hemoglobin HbA complex, variant HBB1"/>
</dbReference>
<dbReference type="ComplexPortal" id="CPX-2926">
    <property type="entry name" value="Hemoglobin HbA complex, variant HBB2"/>
</dbReference>
<dbReference type="FunCoup" id="P01946">
    <property type="interactions" value="47"/>
</dbReference>
<dbReference type="IntAct" id="P01946">
    <property type="interactions" value="3"/>
</dbReference>
<dbReference type="STRING" id="10116.ENSRNOP00000044233"/>
<dbReference type="CarbonylDB" id="P01946"/>
<dbReference type="GlyGen" id="P01946">
    <property type="glycosylation" value="1 site, 1 O-linked glycan (1 site)"/>
</dbReference>
<dbReference type="iPTMnet" id="P01946"/>
<dbReference type="PhosphoSitePlus" id="P01946"/>
<dbReference type="jPOST" id="P01946"/>
<dbReference type="PaxDb" id="10116-ENSRNOP00000044233"/>
<dbReference type="GeneID" id="25632"/>
<dbReference type="GeneID" id="360504"/>
<dbReference type="KEGG" id="rno:25632"/>
<dbReference type="KEGG" id="rno:360504"/>
<dbReference type="UCSC" id="RGD:2782">
    <property type="organism name" value="rat"/>
</dbReference>
<dbReference type="AGR" id="RGD:1359364"/>
<dbReference type="AGR" id="RGD:2782"/>
<dbReference type="CTD" id="110257"/>
<dbReference type="CTD" id="15122"/>
<dbReference type="RGD" id="2782">
    <property type="gene designation" value="Hba1"/>
</dbReference>
<dbReference type="VEuPathDB" id="HostDB:ENSRNOG00000029886"/>
<dbReference type="eggNOG" id="KOG3378">
    <property type="taxonomic scope" value="Eukaryota"/>
</dbReference>
<dbReference type="HOGENOM" id="CLU_003827_10_2_1"/>
<dbReference type="InParanoid" id="P01946"/>
<dbReference type="OrthoDB" id="82671at9989"/>
<dbReference type="PhylomeDB" id="P01946"/>
<dbReference type="TreeFam" id="TF332328"/>
<dbReference type="Reactome" id="R-RNO-1237044">
    <property type="pathway name" value="Erythrocytes take up carbon dioxide and release oxygen"/>
</dbReference>
<dbReference type="Reactome" id="R-RNO-1247673">
    <property type="pathway name" value="Erythrocytes take up oxygen and release carbon dioxide"/>
</dbReference>
<dbReference type="Reactome" id="R-RNO-2168880">
    <property type="pathway name" value="Scavenging of heme from plasma"/>
</dbReference>
<dbReference type="Reactome" id="R-RNO-9707564">
    <property type="pathway name" value="Cytoprotection by HMOX1"/>
</dbReference>
<dbReference type="Reactome" id="R-RNO-9707616">
    <property type="pathway name" value="Heme signaling"/>
</dbReference>
<dbReference type="EvolutionaryTrace" id="P01946"/>
<dbReference type="PRO" id="PR:P01946"/>
<dbReference type="Proteomes" id="UP000002494">
    <property type="component" value="Chromosome 10"/>
</dbReference>
<dbReference type="Bgee" id="ENSRNOG00000029886">
    <property type="expression patterns" value="Expressed in spleen and 18 other cell types or tissues"/>
</dbReference>
<dbReference type="ExpressionAtlas" id="P01946">
    <property type="expression patterns" value="baseline and differential"/>
</dbReference>
<dbReference type="GO" id="GO:0031838">
    <property type="term" value="C:haptoglobin-hemoglobin complex"/>
    <property type="evidence" value="ECO:0000318"/>
    <property type="project" value="GO_Central"/>
</dbReference>
<dbReference type="GO" id="GO:0005833">
    <property type="term" value="C:hemoglobin complex"/>
    <property type="evidence" value="ECO:0000266"/>
    <property type="project" value="RGD"/>
</dbReference>
<dbReference type="GO" id="GO:0001540">
    <property type="term" value="F:amyloid-beta binding"/>
    <property type="evidence" value="ECO:0000314"/>
    <property type="project" value="RGD"/>
</dbReference>
<dbReference type="GO" id="GO:0020037">
    <property type="term" value="F:heme binding"/>
    <property type="evidence" value="ECO:0000318"/>
    <property type="project" value="GO_Central"/>
</dbReference>
<dbReference type="GO" id="GO:0005506">
    <property type="term" value="F:iron ion binding"/>
    <property type="evidence" value="ECO:0007669"/>
    <property type="project" value="InterPro"/>
</dbReference>
<dbReference type="GO" id="GO:0019825">
    <property type="term" value="F:oxygen binding"/>
    <property type="evidence" value="ECO:0000318"/>
    <property type="project" value="GO_Central"/>
</dbReference>
<dbReference type="GO" id="GO:0005344">
    <property type="term" value="F:oxygen carrier activity"/>
    <property type="evidence" value="ECO:0000318"/>
    <property type="project" value="GO_Central"/>
</dbReference>
<dbReference type="GO" id="GO:0015670">
    <property type="term" value="P:carbon dioxide transport"/>
    <property type="evidence" value="ECO:0000303"/>
    <property type="project" value="ComplexPortal"/>
</dbReference>
<dbReference type="GO" id="GO:0098869">
    <property type="term" value="P:cellular oxidant detoxification"/>
    <property type="evidence" value="ECO:0007669"/>
    <property type="project" value="GOC"/>
</dbReference>
<dbReference type="GO" id="GO:0048821">
    <property type="term" value="P:erythrocyte development"/>
    <property type="evidence" value="ECO:0000266"/>
    <property type="project" value="RGD"/>
</dbReference>
<dbReference type="GO" id="GO:0042744">
    <property type="term" value="P:hydrogen peroxide catabolic process"/>
    <property type="evidence" value="ECO:0000318"/>
    <property type="project" value="GO_Central"/>
</dbReference>
<dbReference type="GO" id="GO:0001701">
    <property type="term" value="P:in utero embryonic development"/>
    <property type="evidence" value="ECO:0000266"/>
    <property type="project" value="RGD"/>
</dbReference>
<dbReference type="GO" id="GO:0045776">
    <property type="term" value="P:negative regulation of blood pressure"/>
    <property type="evidence" value="ECO:0000314"/>
    <property type="project" value="RGD"/>
</dbReference>
<dbReference type="GO" id="GO:0030185">
    <property type="term" value="P:nitric oxide transport"/>
    <property type="evidence" value="ECO:0000266"/>
    <property type="project" value="ComplexPortal"/>
</dbReference>
<dbReference type="GO" id="GO:0015671">
    <property type="term" value="P:oxygen transport"/>
    <property type="evidence" value="ECO:0000266"/>
    <property type="project" value="ComplexPortal"/>
</dbReference>
<dbReference type="GO" id="GO:0009617">
    <property type="term" value="P:response to bacterium"/>
    <property type="evidence" value="ECO:0000266"/>
    <property type="project" value="RGD"/>
</dbReference>
<dbReference type="GO" id="GO:0035634">
    <property type="term" value="P:response to stilbenoid"/>
    <property type="evidence" value="ECO:0000266"/>
    <property type="project" value="RGD"/>
</dbReference>
<dbReference type="CDD" id="cd08927">
    <property type="entry name" value="Hb-alpha-like"/>
    <property type="match status" value="1"/>
</dbReference>
<dbReference type="FunFam" id="1.10.490.10:FF:000002">
    <property type="entry name" value="Hemoglobin subunit alpha"/>
    <property type="match status" value="1"/>
</dbReference>
<dbReference type="Gene3D" id="1.10.490.10">
    <property type="entry name" value="Globins"/>
    <property type="match status" value="1"/>
</dbReference>
<dbReference type="InterPro" id="IPR000971">
    <property type="entry name" value="Globin"/>
</dbReference>
<dbReference type="InterPro" id="IPR009050">
    <property type="entry name" value="Globin-like_sf"/>
</dbReference>
<dbReference type="InterPro" id="IPR012292">
    <property type="entry name" value="Globin/Proto"/>
</dbReference>
<dbReference type="InterPro" id="IPR002338">
    <property type="entry name" value="Hemoglobin_a-typ"/>
</dbReference>
<dbReference type="InterPro" id="IPR050056">
    <property type="entry name" value="Hemoglobin_oxygen_transport"/>
</dbReference>
<dbReference type="InterPro" id="IPR002339">
    <property type="entry name" value="Hemoglobin_pi"/>
</dbReference>
<dbReference type="PANTHER" id="PTHR11442">
    <property type="entry name" value="HEMOGLOBIN FAMILY MEMBER"/>
    <property type="match status" value="1"/>
</dbReference>
<dbReference type="PANTHER" id="PTHR11442:SF48">
    <property type="entry name" value="HEMOGLOBIN SUBUNIT ALPHA"/>
    <property type="match status" value="1"/>
</dbReference>
<dbReference type="Pfam" id="PF00042">
    <property type="entry name" value="Globin"/>
    <property type="match status" value="1"/>
</dbReference>
<dbReference type="PRINTS" id="PR00612">
    <property type="entry name" value="ALPHAHAEM"/>
</dbReference>
<dbReference type="PRINTS" id="PR00815">
    <property type="entry name" value="PIHAEM"/>
</dbReference>
<dbReference type="SUPFAM" id="SSF46458">
    <property type="entry name" value="Globin-like"/>
    <property type="match status" value="1"/>
</dbReference>
<dbReference type="PROSITE" id="PS01033">
    <property type="entry name" value="GLOBIN"/>
    <property type="match status" value="1"/>
</dbReference>
<accession>P01946</accession>
<accession>P33583</accession>
<accession>Q63243</accession>
<accession>Q80XV2</accession>
<accession>Q91V15</accession>
<reference key="1">
    <citation type="journal article" date="1975" name="Biochem. J.">
        <title>The amino acid sequence of the alpha chain of the major haemoglobin of the rat (Rattus norvegicus).</title>
        <authorList>
            <person name="Chua C.G."/>
            <person name="Carrell R.W."/>
            <person name="Howard B.H."/>
        </authorList>
    </citation>
    <scope>PROTEIN SEQUENCE (ALPHA-1)</scope>
</reference>
<reference key="2">
    <citation type="journal article" date="1987" name="Biochem. Biophys. Res. Commun.">
        <title>Molecular cloning and sequence analysis of two rat major globin cDNAs.</title>
        <authorList>
            <person name="Satoh H."/>
            <person name="Fujii H."/>
            <person name="Okazaki T."/>
        </authorList>
    </citation>
    <scope>NUCLEOTIDE SEQUENCE [MRNA] (ALPHA-1)</scope>
</reference>
<reference key="3">
    <citation type="journal article" date="1999" name="Gene">
        <title>Molecular cloning and characterization of two sets of alpha-theta genes in the rat alpha-like globin gene cluster.</title>
        <authorList>
            <person name="Satoh H."/>
            <person name="Inokuchi N."/>
            <person name="Nagae Y."/>
            <person name="Okazaki T."/>
        </authorList>
    </citation>
    <scope>NUCLEOTIDE SEQUENCE [GENOMIC DNA]</scope>
    <scope>VARIANT ALA-6</scope>
    <source>
        <strain>Wistar</strain>
        <tissue>Liver</tissue>
    </source>
</reference>
<reference key="4">
    <citation type="submission" date="1996-05" db="EMBL/GenBank/DDBJ databases">
        <title>Cloning and characterisation of a rat alpha-globin gene.</title>
        <authorList>
            <person name="Ma C.W."/>
            <person name="Cheng L.Y.L."/>
            <person name="Lam V.M.S."/>
        </authorList>
    </citation>
    <scope>NUCLEOTIDE SEQUENCE [GENOMIC DNA] (ALPHA-2)</scope>
    <source>
        <strain>Sprague-Dawley</strain>
        <tissue>Liver</tissue>
    </source>
</reference>
<reference key="5">
    <citation type="journal article" date="2004" name="Genome Res.">
        <title>The status, quality, and expansion of the NIH full-length cDNA project: the Mammalian Gene Collection (MGC).</title>
        <authorList>
            <consortium name="The MGC Project Team"/>
        </authorList>
    </citation>
    <scope>NUCLEOTIDE SEQUENCE [LARGE SCALE MRNA]</scope>
    <scope>VARIANT ALA-6</scope>
    <source>
        <tissue>Pituitary</tissue>
        <tissue>Placenta</tissue>
    </source>
</reference>
<reference key="6">
    <citation type="journal article" date="1975" name="Biochem. J.">
        <title>Rat haemoglobin heterogeneity. Two structurally distinct alpha chains and functional behaviour of selected components.</title>
        <authorList>
            <person name="Garrick L.M."/>
            <person name="Sharma V.S."/>
            <person name="McDonald M.J."/>
            <person name="Ranney H.M."/>
        </authorList>
    </citation>
    <scope>PARTIAL PROTEIN SEQUENCE (ALPHA-1 AND -2)</scope>
</reference>
<reference key="7">
    <citation type="journal article" date="1972" name="Life Sci.">
        <title>Partial amino acid sequence of some tryptic peptides of the alpha-1 chain of Rattus norvegicus hemoglobin.</title>
        <authorList>
            <person name="Brdicka R."/>
            <person name="Massa A."/>
            <person name="Carta S."/>
            <person name="Tentori L."/>
            <person name="Vivaldi G."/>
        </authorList>
    </citation>
    <scope>PARTIAL PROTEIN SEQUENCE (ALPHA-1)</scope>
</reference>
<reference key="8">
    <citation type="journal article" date="1993" name="Hemoglobin">
        <title>Two new rat alpha-globin sequences as identified by the conserved region PCR.</title>
        <authorList>
            <person name="Lam V.M."/>
            <person name="Gu Y.L."/>
            <person name="Au D.M."/>
            <person name="Wong W.M."/>
            <person name="Ma C.W."/>
            <person name="Cheng L.Y."/>
        </authorList>
    </citation>
    <scope>NUCLEOTIDE SEQUENCE [GENOMIC DNA] OF 1-89</scope>
    <scope>VARIANT ALPHA-2 ALA-6</scope>
    <source>
        <strain>Sprague-Dawley</strain>
    </source>
</reference>
<reference key="9">
    <citation type="journal article" date="1993" name="Biochim. Biophys. Acta">
        <title>Purification and characterization of fatty acid-binding proteins from brown adipose tissue of the rat.</title>
        <authorList>
            <person name="Dutta-Roy A.K."/>
            <person name="Huang Y."/>
            <person name="Dunbar B."/>
            <person name="Trayhurn P."/>
        </authorList>
    </citation>
    <scope>PROTEIN SEQUENCE OF 2-36</scope>
    <source>
        <tissue>Brown adipose tissue</tissue>
    </source>
</reference>
<reference key="10">
    <citation type="submission" date="2007-07" db="UniProtKB">
        <authorList>
            <person name="Lubec G."/>
            <person name="Afjehi-Sadat L."/>
            <person name="Diao W."/>
            <person name="Kang S.U."/>
        </authorList>
    </citation>
    <scope>PROTEIN SEQUENCE OF 2-12; 18-57; 70-100 AND 129-140</scope>
    <scope>IDENTIFICATION BY MASS SPECTROMETRY</scope>
    <source>
        <strain>Sprague-Dawley</strain>
        <tissue>Brain</tissue>
        <tissue>Hippocampus</tissue>
        <tissue>Spinal cord</tissue>
    </source>
</reference>
<reference key="11">
    <citation type="journal article" date="1984" name="Hemoglobin">
        <title>Characterization of two rat globin cDNA clones.</title>
        <authorList>
            <person name="Crkvenjakov R."/>
            <person name="Bucan M."/>
            <person name="Konstantinovic M."/>
            <person name="Fogel M."/>
            <person name="Savic A."/>
            <person name="Glisin V."/>
        </authorList>
    </citation>
    <scope>NUCLEOTIDE SEQUENCE [MRNA] OF 76-92 AND 95-141</scope>
</reference>
<reference key="12">
    <citation type="journal article" date="2003" name="J. Biol. Chem.">
        <title>Novel natural peptide substrates for endopeptidase 24.15, neurolysin, and angiotensin-converting enzyme.</title>
        <authorList>
            <person name="Rioli V."/>
            <person name="Gozzo F.C."/>
            <person name="Heimann A.S."/>
            <person name="Linardi A."/>
            <person name="Krieger J.E."/>
            <person name="Shida C.S."/>
            <person name="Almeida P.C."/>
            <person name="Hyslop S."/>
            <person name="Eberlin M.N."/>
            <person name="Ferro E.S."/>
        </authorList>
    </citation>
    <scope>PROTEIN SEQUENCE OF 96-104 (HEMOPRESSIN)</scope>
</reference>
<reference key="13">
    <citation type="journal article" date="2007" name="Proc. Natl. Acad. Sci. U.S.A.">
        <title>Hemopressin is an inverse agonist of CB1 cannabinoid receptors.</title>
        <authorList>
            <person name="Heimann A.S."/>
            <person name="Gomes I."/>
            <person name="Dale C.S."/>
            <person name="Pagano R.L."/>
            <person name="Gupta A."/>
            <person name="de Souza L.L."/>
            <person name="Luchessi A.D."/>
            <person name="Castro L.M."/>
            <person name="Giorgi R."/>
            <person name="Rioli V."/>
            <person name="Ferro E.S."/>
            <person name="Devi L.A."/>
        </authorList>
    </citation>
    <scope>FUNCTION (HEMOPRESSIN)</scope>
</reference>
<name>HBA_RAT</name>
<comment type="function">
    <text>Involved in oxygen transport from the lung to the various peripheral tissues.</text>
</comment>
<comment type="function">
    <molecule>Hemopressin</molecule>
    <text evidence="7">Hemopressin acts as an antagonist peptide of the cannabinoid receptor CNR1 (PubMed:18077343). Hemopressin-binding efficiently blocks cannabinoid receptor CNR1 and subsequent signaling (PubMed:18077343).</text>
</comment>
<comment type="subunit">
    <text>Heterotetramer of two alpha chains and two beta chains.</text>
</comment>
<comment type="tissue specificity">
    <text>Red blood cells.</text>
</comment>
<comment type="miscellaneous">
    <text>In rats there are two non-allelic alpha chains and two non-allelic beta chains. The alpha-1 chain sequence is shown.</text>
</comment>
<comment type="similarity">
    <text evidence="3">Belongs to the globin family.</text>
</comment>
<comment type="caution">
    <text evidence="12">PubMed:8334153 incorrectly assigned their sequence fragment as a fatty acid-binding protein.</text>
</comment>
<sequence>MVLSADDKTNIKNCWGKIGGHGGEYGEEALQRMFAAFPTTKTYFSHIDVSPGSAQVKAHGKKVADALAKAADHVEDLPGALSTLSDLHAHKLRVDPVNFKFLSHCLLVTLACHHPGDFTPAMHASLDKFLASVSTVLTSKYR</sequence>